<comment type="function">
    <text evidence="9">Involved in the targeting and/or fusion of transport vesicles to their target membrane.</text>
</comment>
<comment type="subcellular location">
    <subcellularLocation>
        <location evidence="5">Vacuole membrane</location>
        <topology evidence="1">Single-pass type IV membrane protein</topology>
    </subcellularLocation>
    <subcellularLocation>
        <location evidence="5">Prevacuolar compartment membrane</location>
        <topology evidence="1">Single-pass type IV membrane protein</topology>
    </subcellularLocation>
</comment>
<comment type="tissue specificity">
    <text evidence="5">Expressed in flowers, leaves, stems and roots.</text>
</comment>
<comment type="domain">
    <text evidence="6">The longin domain is critical for the vacuolar localization.</text>
</comment>
<comment type="similarity">
    <text evidence="8">Belongs to the synaptobrevin family.</text>
</comment>
<organism>
    <name type="scientific">Arabidopsis thaliana</name>
    <name type="common">Mouse-ear cress</name>
    <dbReference type="NCBI Taxonomy" id="3702"/>
    <lineage>
        <taxon>Eukaryota</taxon>
        <taxon>Viridiplantae</taxon>
        <taxon>Streptophyta</taxon>
        <taxon>Embryophyta</taxon>
        <taxon>Tracheophyta</taxon>
        <taxon>Spermatophyta</taxon>
        <taxon>Magnoliopsida</taxon>
        <taxon>eudicotyledons</taxon>
        <taxon>Gunneridae</taxon>
        <taxon>Pentapetalae</taxon>
        <taxon>rosids</taxon>
        <taxon>malvids</taxon>
        <taxon>Brassicales</taxon>
        <taxon>Brassicaceae</taxon>
        <taxon>Camelineae</taxon>
        <taxon>Arabidopsis</taxon>
    </lineage>
</organism>
<accession>Q9SIQ9</accession>
<gene>
    <name evidence="7" type="primary">VAMP712</name>
    <name evidence="10" type="ordered locus">At2g25340</name>
    <name evidence="11" type="ORF">T22F11.7</name>
</gene>
<sequence length="219" mass="24966">MSILYALVARGTVVLAELSTTSTNASTIAKQILEKIPGNGDSHVSYSQDRYVFHVKRTDGLTVLCMADEDAGRRIPFSFLEDIHQRFVRTYGRAIHSAQAYAMNDEFSRVLNQQIEYYSNDPNADTISRIKGEMNQVRDVMIENIDNILDRGERLELLVDKTANMQGNTFRFRKQTRRFNNTVWWRNCKLTLLLILVLLVIIYIGVAFACHGPTLPSCV</sequence>
<reference key="1">
    <citation type="journal article" date="1999" name="Nature">
        <title>Sequence and analysis of chromosome 2 of the plant Arabidopsis thaliana.</title>
        <authorList>
            <person name="Lin X."/>
            <person name="Kaul S."/>
            <person name="Rounsley S.D."/>
            <person name="Shea T.P."/>
            <person name="Benito M.-I."/>
            <person name="Town C.D."/>
            <person name="Fujii C.Y."/>
            <person name="Mason T.M."/>
            <person name="Bowman C.L."/>
            <person name="Barnstead M.E."/>
            <person name="Feldblyum T.V."/>
            <person name="Buell C.R."/>
            <person name="Ketchum K.A."/>
            <person name="Lee J.J."/>
            <person name="Ronning C.M."/>
            <person name="Koo H.L."/>
            <person name="Moffat K.S."/>
            <person name="Cronin L.A."/>
            <person name="Shen M."/>
            <person name="Pai G."/>
            <person name="Van Aken S."/>
            <person name="Umayam L."/>
            <person name="Tallon L.J."/>
            <person name="Gill J.E."/>
            <person name="Adams M.D."/>
            <person name="Carrera A.J."/>
            <person name="Creasy T.H."/>
            <person name="Goodman H.M."/>
            <person name="Somerville C.R."/>
            <person name="Copenhaver G.P."/>
            <person name="Preuss D."/>
            <person name="Nierman W.C."/>
            <person name="White O."/>
            <person name="Eisen J.A."/>
            <person name="Salzberg S.L."/>
            <person name="Fraser C.M."/>
            <person name="Venter J.C."/>
        </authorList>
    </citation>
    <scope>NUCLEOTIDE SEQUENCE [LARGE SCALE GENOMIC DNA]</scope>
    <source>
        <strain>cv. Columbia</strain>
    </source>
</reference>
<reference key="2">
    <citation type="journal article" date="2017" name="Plant J.">
        <title>Araport11: a complete reannotation of the Arabidopsis thaliana reference genome.</title>
        <authorList>
            <person name="Cheng C.Y."/>
            <person name="Krishnakumar V."/>
            <person name="Chan A.P."/>
            <person name="Thibaud-Nissen F."/>
            <person name="Schobel S."/>
            <person name="Town C.D."/>
        </authorList>
    </citation>
    <scope>GENOME REANNOTATION</scope>
    <source>
        <strain>cv. Columbia</strain>
    </source>
</reference>
<reference key="3">
    <citation type="journal article" date="2000" name="Plant Physiol.">
        <title>The Arabidopsis genome. An abundance of soluble N-ethylmaleimide-sensitive factor adaptor protein receptors.</title>
        <authorList>
            <person name="Sanderfoot A.A."/>
            <person name="Assaad F.F."/>
            <person name="Raikhel N.V."/>
        </authorList>
    </citation>
    <scope>GENE FAMILY</scope>
    <scope>NOMENCLATURE</scope>
</reference>
<reference key="4">
    <citation type="journal article" date="2004" name="Cell Struct. Funct.">
        <title>Systematic analysis of SNARE molecules in Arabidopsis: dissection of the post-Golgi network in plant cells.</title>
        <authorList>
            <person name="Uemura T."/>
            <person name="Ueda T."/>
            <person name="Ohniwa R.L."/>
            <person name="Nakano A."/>
            <person name="Takeyasu K."/>
            <person name="Sato M.H."/>
        </authorList>
    </citation>
    <scope>TISSUE SPECIFICITY</scope>
    <scope>SUBCELLULAR LOCATION</scope>
</reference>
<reference key="5">
    <citation type="journal article" date="2005" name="FEBS Lett.">
        <title>The longin domain regulates subcellular targeting of VAMP7 in Arabidopsis thaliana.</title>
        <authorList>
            <person name="Uemura T."/>
            <person name="Sato M.H."/>
            <person name="Takeyasu K."/>
        </authorList>
    </citation>
    <scope>DOMAIN</scope>
</reference>
<protein>
    <recommendedName>
        <fullName evidence="7">Vesicle-associated membrane protein 712</fullName>
        <shortName evidence="7">AtVAMP712</shortName>
    </recommendedName>
</protein>
<keyword id="KW-0175">Coiled coil</keyword>
<keyword id="KW-0472">Membrane</keyword>
<keyword id="KW-0653">Protein transport</keyword>
<keyword id="KW-1185">Reference proteome</keyword>
<keyword id="KW-0812">Transmembrane</keyword>
<keyword id="KW-1133">Transmembrane helix</keyword>
<keyword id="KW-0813">Transport</keyword>
<keyword id="KW-0926">Vacuole</keyword>
<name>VA712_ARATH</name>
<evidence type="ECO:0000250" key="1">
    <source>
        <dbReference type="UniProtKB" id="Q12255"/>
    </source>
</evidence>
<evidence type="ECO:0000255" key="2"/>
<evidence type="ECO:0000255" key="3">
    <source>
        <dbReference type="PROSITE-ProRule" id="PRU00231"/>
    </source>
</evidence>
<evidence type="ECO:0000255" key="4">
    <source>
        <dbReference type="PROSITE-ProRule" id="PRU00290"/>
    </source>
</evidence>
<evidence type="ECO:0000269" key="5">
    <source>
    </source>
</evidence>
<evidence type="ECO:0000269" key="6">
    <source>
    </source>
</evidence>
<evidence type="ECO:0000303" key="7">
    <source>
    </source>
</evidence>
<evidence type="ECO:0000305" key="8"/>
<evidence type="ECO:0000305" key="9">
    <source>
    </source>
</evidence>
<evidence type="ECO:0000312" key="10">
    <source>
        <dbReference type="Araport" id="AT2G25340"/>
    </source>
</evidence>
<evidence type="ECO:0000312" key="11">
    <source>
        <dbReference type="EMBL" id="AAD23657.1"/>
    </source>
</evidence>
<proteinExistence type="evidence at transcript level"/>
<dbReference type="EMBL" id="AC007070">
    <property type="protein sequence ID" value="AAD23657.1"/>
    <property type="molecule type" value="Genomic_DNA"/>
</dbReference>
<dbReference type="EMBL" id="CP002685">
    <property type="protein sequence ID" value="AEC07690.1"/>
    <property type="molecule type" value="Genomic_DNA"/>
</dbReference>
<dbReference type="PIR" id="C84647">
    <property type="entry name" value="C84647"/>
</dbReference>
<dbReference type="RefSeq" id="NP_180106.1">
    <property type="nucleotide sequence ID" value="NM_128091.1"/>
</dbReference>
<dbReference type="SMR" id="Q9SIQ9"/>
<dbReference type="FunCoup" id="Q9SIQ9">
    <property type="interactions" value="2114"/>
</dbReference>
<dbReference type="STRING" id="3702.Q9SIQ9"/>
<dbReference type="PaxDb" id="3702-AT2G25340.1"/>
<dbReference type="ProteomicsDB" id="243251"/>
<dbReference type="EnsemblPlants" id="AT2G25340.1">
    <property type="protein sequence ID" value="AT2G25340.1"/>
    <property type="gene ID" value="AT2G25340"/>
</dbReference>
<dbReference type="GeneID" id="817072"/>
<dbReference type="Gramene" id="AT2G25340.1">
    <property type="protein sequence ID" value="AT2G25340.1"/>
    <property type="gene ID" value="AT2G25340"/>
</dbReference>
<dbReference type="KEGG" id="ath:AT2G25340"/>
<dbReference type="Araport" id="AT2G25340"/>
<dbReference type="TAIR" id="AT2G25340">
    <property type="gene designation" value="VAMP712"/>
</dbReference>
<dbReference type="eggNOG" id="KOG0859">
    <property type="taxonomic scope" value="Eukaryota"/>
</dbReference>
<dbReference type="HOGENOM" id="CLU_064620_1_2_1"/>
<dbReference type="InParanoid" id="Q9SIQ9"/>
<dbReference type="OMA" id="LGHYFFH"/>
<dbReference type="OrthoDB" id="248747at2759"/>
<dbReference type="PhylomeDB" id="Q9SIQ9"/>
<dbReference type="PRO" id="PR:Q9SIQ9"/>
<dbReference type="Proteomes" id="UP000006548">
    <property type="component" value="Chromosome 2"/>
</dbReference>
<dbReference type="ExpressionAtlas" id="Q9SIQ9">
    <property type="expression patterns" value="baseline and differential"/>
</dbReference>
<dbReference type="GO" id="GO:0005774">
    <property type="term" value="C:vacuolar membrane"/>
    <property type="evidence" value="ECO:0000304"/>
    <property type="project" value="TAIR"/>
</dbReference>
<dbReference type="GO" id="GO:0015031">
    <property type="term" value="P:protein transport"/>
    <property type="evidence" value="ECO:0007669"/>
    <property type="project" value="UniProtKB-KW"/>
</dbReference>
<dbReference type="GO" id="GO:0016192">
    <property type="term" value="P:vesicle-mediated transport"/>
    <property type="evidence" value="ECO:0007669"/>
    <property type="project" value="InterPro"/>
</dbReference>
<dbReference type="CDD" id="cd14824">
    <property type="entry name" value="Longin"/>
    <property type="match status" value="1"/>
</dbReference>
<dbReference type="CDD" id="cd15843">
    <property type="entry name" value="R-SNARE"/>
    <property type="match status" value="1"/>
</dbReference>
<dbReference type="FunFam" id="1.20.5.110:FF:000004">
    <property type="entry name" value="Vesicle-associated membrane protein 7"/>
    <property type="match status" value="1"/>
</dbReference>
<dbReference type="FunFam" id="3.30.450.50:FF:000008">
    <property type="entry name" value="Vesicle-associated membrane protein 711"/>
    <property type="match status" value="1"/>
</dbReference>
<dbReference type="Gene3D" id="1.20.5.110">
    <property type="match status" value="1"/>
</dbReference>
<dbReference type="Gene3D" id="3.30.450.50">
    <property type="entry name" value="Longin domain"/>
    <property type="match status" value="1"/>
</dbReference>
<dbReference type="InterPro" id="IPR011012">
    <property type="entry name" value="Longin-like_dom_sf"/>
</dbReference>
<dbReference type="InterPro" id="IPR010908">
    <property type="entry name" value="Longin_dom"/>
</dbReference>
<dbReference type="InterPro" id="IPR001388">
    <property type="entry name" value="Synaptobrevin-like"/>
</dbReference>
<dbReference type="InterPro" id="IPR051097">
    <property type="entry name" value="Synaptobrevin-like_transport"/>
</dbReference>
<dbReference type="InterPro" id="IPR042855">
    <property type="entry name" value="V_SNARE_CC"/>
</dbReference>
<dbReference type="PANTHER" id="PTHR21136">
    <property type="entry name" value="SNARE PROTEINS"/>
    <property type="match status" value="1"/>
</dbReference>
<dbReference type="PANTHER" id="PTHR21136:SF172">
    <property type="entry name" value="VESICLE-ASSOCIATED MEMBRANE PROTEIN 711-RELATED"/>
    <property type="match status" value="1"/>
</dbReference>
<dbReference type="Pfam" id="PF13774">
    <property type="entry name" value="Longin"/>
    <property type="match status" value="1"/>
</dbReference>
<dbReference type="Pfam" id="PF00957">
    <property type="entry name" value="Synaptobrevin"/>
    <property type="match status" value="1"/>
</dbReference>
<dbReference type="PRINTS" id="PR00219">
    <property type="entry name" value="SYNAPTOBREVN"/>
</dbReference>
<dbReference type="SMART" id="SM01270">
    <property type="entry name" value="Longin"/>
    <property type="match status" value="1"/>
</dbReference>
<dbReference type="SUPFAM" id="SSF58038">
    <property type="entry name" value="SNARE fusion complex"/>
    <property type="match status" value="1"/>
</dbReference>
<dbReference type="SUPFAM" id="SSF64356">
    <property type="entry name" value="SNARE-like"/>
    <property type="match status" value="1"/>
</dbReference>
<dbReference type="PROSITE" id="PS50859">
    <property type="entry name" value="LONGIN"/>
    <property type="match status" value="1"/>
</dbReference>
<dbReference type="PROSITE" id="PS00417">
    <property type="entry name" value="SYNAPTOBREVIN"/>
    <property type="match status" value="1"/>
</dbReference>
<dbReference type="PROSITE" id="PS50892">
    <property type="entry name" value="V_SNARE"/>
    <property type="match status" value="1"/>
</dbReference>
<feature type="chain" id="PRO_0000206751" description="Vesicle-associated membrane protein 712">
    <location>
        <begin position="1"/>
        <end position="219"/>
    </location>
</feature>
<feature type="topological domain" description="Cytoplasmic" evidence="2">
    <location>
        <begin position="1"/>
        <end position="189"/>
    </location>
</feature>
<feature type="transmembrane region" description="Helical; Anchor for type IV membrane protein" evidence="2">
    <location>
        <begin position="190"/>
        <end position="210"/>
    </location>
</feature>
<feature type="topological domain" description="Vesicular" evidence="2">
    <location>
        <begin position="211"/>
        <end position="219"/>
    </location>
</feature>
<feature type="domain" description="Longin" evidence="3">
    <location>
        <begin position="7"/>
        <end position="111"/>
    </location>
</feature>
<feature type="domain" description="v-SNARE coiled-coil homology" evidence="4">
    <location>
        <begin position="126"/>
        <end position="186"/>
    </location>
</feature>